<organism>
    <name type="scientific">Danio rerio</name>
    <name type="common">Zebrafish</name>
    <name type="synonym">Brachydanio rerio</name>
    <dbReference type="NCBI Taxonomy" id="7955"/>
    <lineage>
        <taxon>Eukaryota</taxon>
        <taxon>Metazoa</taxon>
        <taxon>Chordata</taxon>
        <taxon>Craniata</taxon>
        <taxon>Vertebrata</taxon>
        <taxon>Euteleostomi</taxon>
        <taxon>Actinopterygii</taxon>
        <taxon>Neopterygii</taxon>
        <taxon>Teleostei</taxon>
        <taxon>Ostariophysi</taxon>
        <taxon>Cypriniformes</taxon>
        <taxon>Danionidae</taxon>
        <taxon>Danioninae</taxon>
        <taxon>Danio</taxon>
    </lineage>
</organism>
<dbReference type="EMBL" id="AJ252024">
    <property type="protein sequence ID" value="CAB64948.1"/>
    <property type="molecule type" value="mRNA"/>
</dbReference>
<dbReference type="EMBL" id="AF198446">
    <property type="protein sequence ID" value="AAG27086.2"/>
    <property type="molecule type" value="mRNA"/>
</dbReference>
<dbReference type="EMBL" id="AF424786">
    <property type="protein sequence ID" value="AAL17865.1"/>
    <property type="molecule type" value="mRNA"/>
</dbReference>
<dbReference type="EMBL" id="AF443870">
    <property type="protein sequence ID" value="AAL38028.1"/>
    <property type="molecule type" value="mRNA"/>
</dbReference>
<dbReference type="EMBL" id="BX510366">
    <property type="status" value="NOT_ANNOTATED_CDS"/>
    <property type="molecule type" value="Genomic_DNA"/>
</dbReference>
<dbReference type="EMBL" id="BX510917">
    <property type="status" value="NOT_ANNOTATED_CDS"/>
    <property type="molecule type" value="Genomic_DNA"/>
</dbReference>
<dbReference type="EMBL" id="BC128811">
    <property type="protein sequence ID" value="AAI28812.1"/>
    <property type="molecule type" value="mRNA"/>
</dbReference>
<dbReference type="RefSeq" id="NP_571174.1">
    <property type="nucleotide sequence ID" value="NM_131099.2"/>
</dbReference>
<dbReference type="RefSeq" id="XP_005165156.1">
    <property type="nucleotide sequence ID" value="XM_005165099.3"/>
</dbReference>
<dbReference type="RefSeq" id="XP_009299558.1">
    <molecule id="A2BGM5-3"/>
    <property type="nucleotide sequence ID" value="XM_009301283.3"/>
</dbReference>
<dbReference type="SMR" id="A2BGM5"/>
<dbReference type="FunCoup" id="A2BGM5">
    <property type="interactions" value="2397"/>
</dbReference>
<dbReference type="STRING" id="7955.ENSDARP00000020367"/>
<dbReference type="PaxDb" id="7955-ENSDARP00000020367"/>
<dbReference type="PeptideAtlas" id="A2BGM5"/>
<dbReference type="Ensembl" id="ENSDART00000008994">
    <molecule id="A2BGM5-1"/>
    <property type="protein sequence ID" value="ENSDARP00000020367"/>
    <property type="gene ID" value="ENSDARG00000010591"/>
</dbReference>
<dbReference type="GeneID" id="30315"/>
<dbReference type="KEGG" id="dre:30315"/>
<dbReference type="AGR" id="ZFIN:ZDB-GENE-990415-277"/>
<dbReference type="CTD" id="121643"/>
<dbReference type="ZFIN" id="ZDB-GENE-990415-277">
    <property type="gene designation" value="foxn4"/>
</dbReference>
<dbReference type="eggNOG" id="KOG2294">
    <property type="taxonomic scope" value="Eukaryota"/>
</dbReference>
<dbReference type="InParanoid" id="A2BGM5"/>
<dbReference type="OMA" id="QCPTSVY"/>
<dbReference type="OrthoDB" id="10070006at2759"/>
<dbReference type="PhylomeDB" id="A2BGM5"/>
<dbReference type="TreeFam" id="TF329867"/>
<dbReference type="PRO" id="PR:A2BGM5"/>
<dbReference type="Proteomes" id="UP000000437">
    <property type="component" value="Chromosome 5"/>
</dbReference>
<dbReference type="Bgee" id="ENSDARG00000010591">
    <property type="expression patterns" value="Expressed in face and 29 other cell types or tissues"/>
</dbReference>
<dbReference type="GO" id="GO:0005634">
    <property type="term" value="C:nucleus"/>
    <property type="evidence" value="ECO:0000250"/>
    <property type="project" value="UniProtKB"/>
</dbReference>
<dbReference type="GO" id="GO:0003682">
    <property type="term" value="F:chromatin binding"/>
    <property type="evidence" value="ECO:0000250"/>
    <property type="project" value="UniProtKB"/>
</dbReference>
<dbReference type="GO" id="GO:0000987">
    <property type="term" value="F:cis-regulatory region sequence-specific DNA binding"/>
    <property type="evidence" value="ECO:0000250"/>
    <property type="project" value="UniProtKB"/>
</dbReference>
<dbReference type="GO" id="GO:0003700">
    <property type="term" value="F:DNA-binding transcription factor activity"/>
    <property type="evidence" value="ECO:0000314"/>
    <property type="project" value="ZFIN"/>
</dbReference>
<dbReference type="GO" id="GO:0000981">
    <property type="term" value="F:DNA-binding transcription factor activity, RNA polymerase II-specific"/>
    <property type="evidence" value="ECO:0000250"/>
    <property type="project" value="UniProtKB"/>
</dbReference>
<dbReference type="GO" id="GO:0043565">
    <property type="term" value="F:sequence-specific DNA binding"/>
    <property type="evidence" value="ECO:0000314"/>
    <property type="project" value="ZFIN"/>
</dbReference>
<dbReference type="GO" id="GO:0035881">
    <property type="term" value="P:amacrine cell differentiation"/>
    <property type="evidence" value="ECO:0000250"/>
    <property type="project" value="UniProtKB"/>
</dbReference>
<dbReference type="GO" id="GO:0036302">
    <property type="term" value="P:atrioventricular canal development"/>
    <property type="evidence" value="ECO:0000315"/>
    <property type="project" value="UniProtKB"/>
</dbReference>
<dbReference type="GO" id="GO:0001947">
    <property type="term" value="P:heart looping"/>
    <property type="evidence" value="ECO:0000315"/>
    <property type="project" value="UniProtKB"/>
</dbReference>
<dbReference type="GO" id="GO:0003170">
    <property type="term" value="P:heart valve development"/>
    <property type="evidence" value="ECO:0000315"/>
    <property type="project" value="ZFIN"/>
</dbReference>
<dbReference type="GO" id="GO:0045893">
    <property type="term" value="P:positive regulation of DNA-templated transcription"/>
    <property type="evidence" value="ECO:0000314"/>
    <property type="project" value="ZFIN"/>
</dbReference>
<dbReference type="GO" id="GO:0045944">
    <property type="term" value="P:positive regulation of transcription by RNA polymerase II"/>
    <property type="evidence" value="ECO:0000250"/>
    <property type="project" value="UniProtKB"/>
</dbReference>
<dbReference type="GO" id="GO:0006355">
    <property type="term" value="P:regulation of DNA-templated transcription"/>
    <property type="evidence" value="ECO:0000250"/>
    <property type="project" value="UniProtKB"/>
</dbReference>
<dbReference type="GO" id="GO:0008016">
    <property type="term" value="P:regulation of heart contraction"/>
    <property type="evidence" value="ECO:0000315"/>
    <property type="project" value="UniProtKB"/>
</dbReference>
<dbReference type="GO" id="GO:0010842">
    <property type="term" value="P:retina layer formation"/>
    <property type="evidence" value="ECO:0000250"/>
    <property type="project" value="UniProtKB"/>
</dbReference>
<dbReference type="GO" id="GO:0060579">
    <property type="term" value="P:ventral spinal cord interneuron fate commitment"/>
    <property type="evidence" value="ECO:0000250"/>
    <property type="project" value="UniProtKB"/>
</dbReference>
<dbReference type="CDD" id="cd20057">
    <property type="entry name" value="FH_FOXN4"/>
    <property type="match status" value="1"/>
</dbReference>
<dbReference type="FunFam" id="1.10.10.10:FF:000122">
    <property type="entry name" value="Forkhead box protein N1"/>
    <property type="match status" value="1"/>
</dbReference>
<dbReference type="Gene3D" id="1.10.10.10">
    <property type="entry name" value="Winged helix-like DNA-binding domain superfamily/Winged helix DNA-binding domain"/>
    <property type="match status" value="1"/>
</dbReference>
<dbReference type="InterPro" id="IPR001766">
    <property type="entry name" value="Fork_head_dom"/>
</dbReference>
<dbReference type="InterPro" id="IPR049624">
    <property type="entry name" value="FOXN1_4"/>
</dbReference>
<dbReference type="InterPro" id="IPR030456">
    <property type="entry name" value="TF_fork_head_CS_2"/>
</dbReference>
<dbReference type="InterPro" id="IPR036388">
    <property type="entry name" value="WH-like_DNA-bd_sf"/>
</dbReference>
<dbReference type="InterPro" id="IPR036390">
    <property type="entry name" value="WH_DNA-bd_sf"/>
</dbReference>
<dbReference type="PANTHER" id="PTHR46721">
    <property type="entry name" value="FORKHEAD BOX PROTEIN N1"/>
    <property type="match status" value="1"/>
</dbReference>
<dbReference type="PANTHER" id="PTHR46721:SF2">
    <property type="entry name" value="FORKHEAD BOX PROTEIN N4"/>
    <property type="match status" value="1"/>
</dbReference>
<dbReference type="Pfam" id="PF00250">
    <property type="entry name" value="Forkhead"/>
    <property type="match status" value="1"/>
</dbReference>
<dbReference type="PRINTS" id="PR00053">
    <property type="entry name" value="FORKHEAD"/>
</dbReference>
<dbReference type="SMART" id="SM00339">
    <property type="entry name" value="FH"/>
    <property type="match status" value="1"/>
</dbReference>
<dbReference type="SUPFAM" id="SSF46785">
    <property type="entry name" value="Winged helix' DNA-binding domain"/>
    <property type="match status" value="1"/>
</dbReference>
<dbReference type="PROSITE" id="PS00658">
    <property type="entry name" value="FORK_HEAD_2"/>
    <property type="match status" value="1"/>
</dbReference>
<dbReference type="PROSITE" id="PS50039">
    <property type="entry name" value="FORK_HEAD_3"/>
    <property type="match status" value="1"/>
</dbReference>
<accession>A2BGM5</accession>
<accession>Q8UVH2</accession>
<accession>Q90X68</accession>
<accession>Q9DG30</accession>
<accession>Q9PT94</accession>
<gene>
    <name type="primary">foxn4</name>
    <name type="synonym">sli</name>
    <name type="synonym">slipjig</name>
</gene>
<feature type="chain" id="PRO_0000428907" description="Forkhead box protein N4">
    <location>
        <begin position="1"/>
        <end position="550"/>
    </location>
</feature>
<feature type="DNA-binding region" description="Fork-head" evidence="1">
    <location>
        <begin position="231"/>
        <end position="327"/>
    </location>
</feature>
<feature type="region of interest" description="Disordered" evidence="2">
    <location>
        <begin position="402"/>
        <end position="437"/>
    </location>
</feature>
<feature type="compositionally biased region" description="Low complexity" evidence="2">
    <location>
        <begin position="402"/>
        <end position="411"/>
    </location>
</feature>
<feature type="splice variant" id="VSP_054326" description="In isoform 3." evidence="5">
    <location>
        <begin position="1"/>
        <end position="139"/>
    </location>
</feature>
<feature type="splice variant" id="VSP_054327" description="In isoform 2." evidence="5">
    <original>MTVQSKLQGRGKFKKRFFRAGQQVPRPTLELSSVWLSKIFYNPEQHHNKQKMIESGITTRMSGIHENPGQSHHTSAQDYRLLTTDPSQLKDELPGDLQSLSWLTSVDVPRLQQIGGGRPDFTSSAQSSLLERQT</original>
    <variation>MAP</variation>
    <location>
        <begin position="1"/>
        <end position="134"/>
    </location>
</feature>
<feature type="sequence conflict" description="In Ref. 1; CAB64948, 2; AAG27086 and 4; AAI28812." evidence="6" ref="1 2 4">
    <original>Q</original>
    <variation>H</variation>
    <location>
        <position position="8"/>
    </location>
</feature>
<feature type="sequence conflict" description="In Ref. 1; CAB64948." evidence="6" ref="1">
    <original>I</original>
    <variation>V</variation>
    <location>
        <position position="39"/>
    </location>
</feature>
<evidence type="ECO:0000255" key="1">
    <source>
        <dbReference type="PROSITE-ProRule" id="PRU00089"/>
    </source>
</evidence>
<evidence type="ECO:0000256" key="2">
    <source>
        <dbReference type="SAM" id="MobiDB-lite"/>
    </source>
</evidence>
<evidence type="ECO:0000269" key="3">
    <source>
    </source>
</evidence>
<evidence type="ECO:0000269" key="4">
    <source>
    </source>
</evidence>
<evidence type="ECO:0000303" key="5">
    <source>
    </source>
</evidence>
<evidence type="ECO:0000305" key="6"/>
<protein>
    <recommendedName>
        <fullName>Forkhead box protein N4</fullName>
    </recommendedName>
</protein>
<comment type="function">
    <text evidence="4">Transcription factor essential for neural and some non-neural tissues development. Binds to an 11-bp consensus sequence containing the invariant tetranucleotide 5'-ACGC-3'. During development of the central nervous system, required to specify the amacrine and horizontal cell fates from multipotent retinal progenitors while suppressing the alternative photoreceptor cell fates. Drives commitment of p2 progenitors to the V2b interneuron fates during spinal cord neurogenesis. In development of non-neural tissues, plays an essential role in the specification of the atrioventricular canal.</text>
</comment>
<comment type="subcellular location">
    <subcellularLocation>
        <location evidence="1">Nucleus</location>
    </subcellularLocation>
</comment>
<comment type="alternative products">
    <event type="alternative promoter"/>
    <isoform>
        <id>A2BGM5-1</id>
        <name>1</name>
        <sequence type="displayed"/>
    </isoform>
    <isoform>
        <id>A2BGM5-2</id>
        <name>2</name>
        <sequence type="described" ref="VSP_054327"/>
    </isoform>
    <isoform>
        <id>A2BGM5-3</id>
        <name>3</name>
        <sequence type="described" ref="VSP_054326"/>
    </isoform>
</comment>
<comment type="tissue specificity">
    <text evidence="3">Isoform 1 is expressed mainly in adult thymus. Isoform 2 is detected in adult skin. Isoform 3 is expressed in adult brain and embryo. Prominent expression sites include the olfactory placode, the basal layer of the olfactory epithelium, the neuroepithelium of the developing retina, the germinal zone of the differentiated eye, regions of motoneuron development in the neural tube and periventricular regions of the brain.</text>
</comment>
<comment type="developmental stage">
    <text evidence="3">In embryo, expressed ubiquitously, but with decreasing intensity, from the one-cell through gastrula stages.</text>
</comment>
<comment type="disruption phenotype">
    <text evidence="4">At 36-48 hpf, mutants exhibit pericardial edema due to dysmorphic hearts that fail to loop and form and atrioventricular (AV) canal. Hearts show continues peristatic pumping rather than coordinated and sequential beating of atrial and ventricular chambers. Endocardial cells remain squamous and AV myocardial cell shape fail to occur.</text>
</comment>
<sequence length="550" mass="60968">MTVQSKLQGRGKFKKRFFRAGQQVPRPTLELSSVWLSKIFYNPEQHHNKQKMIESGITTRMSGIHENPGQSHHTSAQDYRLLTTDPSQLKDELPGDLQSLSWLTSVDVPRLQQIGGGRPDFTSSAQSSLLERQTAQLNSMTVAGGAGSAIHLQSEMQHSPLAINSMPQFSPGFPCAASVYQTAPQQVLTFTQANQQCSPGGLYGNYNSQNLFPQPRITAHSQDLQPKCFPKPIYSYSCLIAMALKNSKTGSLPVSEIYSFMKEHFPYFKTAPDGWKNSVRHNLSLNKCFEKVENKMSGSSRKGCLWALNPAKIDKMEEEMQKWKRKDLPAIRRSMANPDELDKLITDRPESCRQKSVDPGMTRLPSCPPGQTLPLAAQMQPQPVVTLSLQCLPMHQHLQLQLQNQSRLAPSSPAPAQTPPLHTVPDMTNSSLPQHPAKQHTDFYTVHTDVNSEVDALDPSIMDFAWQGNLWEEMKDDSFNLEALGTLSNSPLRLSDCDLDTSSVTPVSSAGGLPYPDLQVTGLYSSYSAIDALSNQYMNTQGGTKPIVLL</sequence>
<reference key="1">
    <citation type="journal article" date="2000" name="Gene">
        <title>Formation of regulator/target gene relationships during evolution.</title>
        <authorList>
            <person name="Schlake T."/>
            <person name="Schorpp M."/>
            <person name="Boehm T."/>
        </authorList>
    </citation>
    <scope>NUCLEOTIDE SEQUENCE [MRNA] (ISOFORM 1)</scope>
</reference>
<reference key="2">
    <citation type="journal article" date="2004" name="Brain Res. Dev. Brain Res.">
        <title>Expression of the winged helix/forkhead gene, foxn4, during zebrafish development.</title>
        <authorList>
            <person name="Danilova N."/>
            <person name="Visel A."/>
            <person name="Willett C.E."/>
            <person name="Steiner L.A."/>
        </authorList>
    </citation>
    <scope>NUCLEOTIDE SEQUENCE [MRNA] (ISOFORMS 1; 2 AND 3)</scope>
    <scope>DEVELOPMENTAL STAGE</scope>
    <scope>TISSUE SPECIFICITY</scope>
    <source>
        <strain>Tuebingen</strain>
        <tissue>Thymus</tissue>
    </source>
</reference>
<reference key="3">
    <citation type="journal article" date="2013" name="Nature">
        <title>The zebrafish reference genome sequence and its relationship to the human genome.</title>
        <authorList>
            <person name="Howe K."/>
            <person name="Clark M.D."/>
            <person name="Torroja C.F."/>
            <person name="Torrance J."/>
            <person name="Berthelot C."/>
            <person name="Muffato M."/>
            <person name="Collins J.E."/>
            <person name="Humphray S."/>
            <person name="McLaren K."/>
            <person name="Matthews L."/>
            <person name="McLaren S."/>
            <person name="Sealy I."/>
            <person name="Caccamo M."/>
            <person name="Churcher C."/>
            <person name="Scott C."/>
            <person name="Barrett J.C."/>
            <person name="Koch R."/>
            <person name="Rauch G.J."/>
            <person name="White S."/>
            <person name="Chow W."/>
            <person name="Kilian B."/>
            <person name="Quintais L.T."/>
            <person name="Guerra-Assuncao J.A."/>
            <person name="Zhou Y."/>
            <person name="Gu Y."/>
            <person name="Yen J."/>
            <person name="Vogel J.H."/>
            <person name="Eyre T."/>
            <person name="Redmond S."/>
            <person name="Banerjee R."/>
            <person name="Chi J."/>
            <person name="Fu B."/>
            <person name="Langley E."/>
            <person name="Maguire S.F."/>
            <person name="Laird G.K."/>
            <person name="Lloyd D."/>
            <person name="Kenyon E."/>
            <person name="Donaldson S."/>
            <person name="Sehra H."/>
            <person name="Almeida-King J."/>
            <person name="Loveland J."/>
            <person name="Trevanion S."/>
            <person name="Jones M."/>
            <person name="Quail M."/>
            <person name="Willey D."/>
            <person name="Hunt A."/>
            <person name="Burton J."/>
            <person name="Sims S."/>
            <person name="McLay K."/>
            <person name="Plumb B."/>
            <person name="Davis J."/>
            <person name="Clee C."/>
            <person name="Oliver K."/>
            <person name="Clark R."/>
            <person name="Riddle C."/>
            <person name="Elliot D."/>
            <person name="Threadgold G."/>
            <person name="Harden G."/>
            <person name="Ware D."/>
            <person name="Begum S."/>
            <person name="Mortimore B."/>
            <person name="Kerry G."/>
            <person name="Heath P."/>
            <person name="Phillimore B."/>
            <person name="Tracey A."/>
            <person name="Corby N."/>
            <person name="Dunn M."/>
            <person name="Johnson C."/>
            <person name="Wood J."/>
            <person name="Clark S."/>
            <person name="Pelan S."/>
            <person name="Griffiths G."/>
            <person name="Smith M."/>
            <person name="Glithero R."/>
            <person name="Howden P."/>
            <person name="Barker N."/>
            <person name="Lloyd C."/>
            <person name="Stevens C."/>
            <person name="Harley J."/>
            <person name="Holt K."/>
            <person name="Panagiotidis G."/>
            <person name="Lovell J."/>
            <person name="Beasley H."/>
            <person name="Henderson C."/>
            <person name="Gordon D."/>
            <person name="Auger K."/>
            <person name="Wright D."/>
            <person name="Collins J."/>
            <person name="Raisen C."/>
            <person name="Dyer L."/>
            <person name="Leung K."/>
            <person name="Robertson L."/>
            <person name="Ambridge K."/>
            <person name="Leongamornlert D."/>
            <person name="McGuire S."/>
            <person name="Gilderthorp R."/>
            <person name="Griffiths C."/>
            <person name="Manthravadi D."/>
            <person name="Nichol S."/>
            <person name="Barker G."/>
            <person name="Whitehead S."/>
            <person name="Kay M."/>
            <person name="Brown J."/>
            <person name="Murnane C."/>
            <person name="Gray E."/>
            <person name="Humphries M."/>
            <person name="Sycamore N."/>
            <person name="Barker D."/>
            <person name="Saunders D."/>
            <person name="Wallis J."/>
            <person name="Babbage A."/>
            <person name="Hammond S."/>
            <person name="Mashreghi-Mohammadi M."/>
            <person name="Barr L."/>
            <person name="Martin S."/>
            <person name="Wray P."/>
            <person name="Ellington A."/>
            <person name="Matthews N."/>
            <person name="Ellwood M."/>
            <person name="Woodmansey R."/>
            <person name="Clark G."/>
            <person name="Cooper J."/>
            <person name="Tromans A."/>
            <person name="Grafham D."/>
            <person name="Skuce C."/>
            <person name="Pandian R."/>
            <person name="Andrews R."/>
            <person name="Harrison E."/>
            <person name="Kimberley A."/>
            <person name="Garnett J."/>
            <person name="Fosker N."/>
            <person name="Hall R."/>
            <person name="Garner P."/>
            <person name="Kelly D."/>
            <person name="Bird C."/>
            <person name="Palmer S."/>
            <person name="Gehring I."/>
            <person name="Berger A."/>
            <person name="Dooley C.M."/>
            <person name="Ersan-Urun Z."/>
            <person name="Eser C."/>
            <person name="Geiger H."/>
            <person name="Geisler M."/>
            <person name="Karotki L."/>
            <person name="Kirn A."/>
            <person name="Konantz J."/>
            <person name="Konantz M."/>
            <person name="Oberlander M."/>
            <person name="Rudolph-Geiger S."/>
            <person name="Teucke M."/>
            <person name="Lanz C."/>
            <person name="Raddatz G."/>
            <person name="Osoegawa K."/>
            <person name="Zhu B."/>
            <person name="Rapp A."/>
            <person name="Widaa S."/>
            <person name="Langford C."/>
            <person name="Yang F."/>
            <person name="Schuster S.C."/>
            <person name="Carter N.P."/>
            <person name="Harrow J."/>
            <person name="Ning Z."/>
            <person name="Herrero J."/>
            <person name="Searle S.M."/>
            <person name="Enright A."/>
            <person name="Geisler R."/>
            <person name="Plasterk R.H."/>
            <person name="Lee C."/>
            <person name="Westerfield M."/>
            <person name="de Jong P.J."/>
            <person name="Zon L.I."/>
            <person name="Postlethwait J.H."/>
            <person name="Nusslein-Volhard C."/>
            <person name="Hubbard T.J."/>
            <person name="Roest Crollius H."/>
            <person name="Rogers J."/>
            <person name="Stemple D.L."/>
        </authorList>
    </citation>
    <scope>NUCLEOTIDE SEQUENCE [LARGE SCALE GENOMIC DNA]</scope>
    <source>
        <strain>Tuebingen</strain>
    </source>
</reference>
<reference key="4">
    <citation type="submission" date="2006-12" db="EMBL/GenBank/DDBJ databases">
        <authorList>
            <consortium name="NIH - Zebrafish Gene Collection (ZGC) project"/>
        </authorList>
    </citation>
    <scope>NUCLEOTIDE SEQUENCE [LARGE SCALE MRNA] (ISOFORM 1)</scope>
    <source>
        <tissue>Kidney</tissue>
    </source>
</reference>
<reference key="5">
    <citation type="journal article" date="2008" name="Genes Dev.">
        <title>Foxn4 directly regulates tbx2b expression and atrioventricular canal formation.</title>
        <authorList>
            <person name="Chi N.C."/>
            <person name="Shaw R.M."/>
            <person name="De Val S."/>
            <person name="Kang G."/>
            <person name="Jan L.Y."/>
            <person name="Black B.L."/>
            <person name="Stainier D.Y."/>
        </authorList>
    </citation>
    <scope>FUNCTION IN HEART DEVELOPMENT</scope>
    <scope>DISRUPTION PHENOTYPE</scope>
    <scope>DNA-BINDING</scope>
</reference>
<keyword id="KW-0877">Alternative promoter usage</keyword>
<keyword id="KW-0217">Developmental protein</keyword>
<keyword id="KW-0238">DNA-binding</keyword>
<keyword id="KW-0524">Neurogenesis</keyword>
<keyword id="KW-0539">Nucleus</keyword>
<keyword id="KW-1185">Reference proteome</keyword>
<keyword id="KW-0804">Transcription</keyword>
<keyword id="KW-0805">Transcription regulation</keyword>
<name>FOXN4_DANRE</name>
<proteinExistence type="evidence at protein level"/>